<comment type="function">
    <text evidence="1">Could be involved in insertion of integral membrane proteins into the membrane.</text>
</comment>
<comment type="subcellular location">
    <subcellularLocation>
        <location evidence="1">Cell inner membrane</location>
        <topology evidence="1">Peripheral membrane protein</topology>
        <orientation evidence="1">Cytoplasmic side</orientation>
    </subcellularLocation>
</comment>
<comment type="similarity">
    <text evidence="1">Belongs to the UPF0161 family.</text>
</comment>
<sequence length="86" mass="9526">METSHSFGAKVLIGAIRIYQLMISPLIGPRCRFVPTCSCYGIQAVKTHGVVKGSWLTVKRILKCHPFNVGGYDPVPPKINNNKENE</sequence>
<reference key="1">
    <citation type="submission" date="2008-02" db="EMBL/GenBank/DDBJ databases">
        <title>Complete sequence of Haemophilus somnus 2336.</title>
        <authorList>
            <consortium name="US DOE Joint Genome Institute"/>
            <person name="Siddaramappa S."/>
            <person name="Duncan A.J."/>
            <person name="Challacombe J.F."/>
            <person name="Rainey D."/>
            <person name="Gillaspy A.F."/>
            <person name="Carson M."/>
            <person name="Gipson J."/>
            <person name="Gipson M."/>
            <person name="Bruce D."/>
            <person name="Detter J.C."/>
            <person name="Han C.S."/>
            <person name="Land M."/>
            <person name="Tapia R."/>
            <person name="Thompson L.S."/>
            <person name="Orvis J."/>
            <person name="Zaitshik J."/>
            <person name="Barnes G."/>
            <person name="Brettin T.S."/>
            <person name="Dyer D.W."/>
            <person name="Inzana T.J."/>
        </authorList>
    </citation>
    <scope>NUCLEOTIDE SEQUENCE [LARGE SCALE GENOMIC DNA]</scope>
    <source>
        <strain>2336</strain>
    </source>
</reference>
<protein>
    <recommendedName>
        <fullName evidence="1">Putative membrane protein insertion efficiency factor</fullName>
    </recommendedName>
</protein>
<organism>
    <name type="scientific">Histophilus somni (strain 2336)</name>
    <name type="common">Haemophilus somnus</name>
    <dbReference type="NCBI Taxonomy" id="228400"/>
    <lineage>
        <taxon>Bacteria</taxon>
        <taxon>Pseudomonadati</taxon>
        <taxon>Pseudomonadota</taxon>
        <taxon>Gammaproteobacteria</taxon>
        <taxon>Pasteurellales</taxon>
        <taxon>Pasteurellaceae</taxon>
        <taxon>Histophilus</taxon>
    </lineage>
</organism>
<gene>
    <name type="ordered locus">HSM_2019</name>
</gene>
<proteinExistence type="inferred from homology"/>
<name>YIDD_HISS2</name>
<feature type="chain" id="PRO_1000122646" description="Putative membrane protein insertion efficiency factor">
    <location>
        <begin position="1"/>
        <end position="86"/>
    </location>
</feature>
<keyword id="KW-0997">Cell inner membrane</keyword>
<keyword id="KW-1003">Cell membrane</keyword>
<keyword id="KW-0472">Membrane</keyword>
<accession>B0URU4</accession>
<dbReference type="EMBL" id="CP000947">
    <property type="protein sequence ID" value="ACA31821.1"/>
    <property type="molecule type" value="Genomic_DNA"/>
</dbReference>
<dbReference type="RefSeq" id="WP_011608286.1">
    <property type="nucleotide sequence ID" value="NC_010519.1"/>
</dbReference>
<dbReference type="STRING" id="228400.HSM_2019"/>
<dbReference type="GeneID" id="31488330"/>
<dbReference type="KEGG" id="hsm:HSM_2019"/>
<dbReference type="HOGENOM" id="CLU_144811_6_0_6"/>
<dbReference type="GO" id="GO:0005886">
    <property type="term" value="C:plasma membrane"/>
    <property type="evidence" value="ECO:0007669"/>
    <property type="project" value="UniProtKB-SubCell"/>
</dbReference>
<dbReference type="HAMAP" id="MF_00386">
    <property type="entry name" value="UPF0161_YidD"/>
    <property type="match status" value="1"/>
</dbReference>
<dbReference type="InterPro" id="IPR002696">
    <property type="entry name" value="Membr_insert_effic_factor_YidD"/>
</dbReference>
<dbReference type="NCBIfam" id="TIGR00278">
    <property type="entry name" value="membrane protein insertion efficiency factor YidD"/>
    <property type="match status" value="1"/>
</dbReference>
<dbReference type="PANTHER" id="PTHR33383">
    <property type="entry name" value="MEMBRANE PROTEIN INSERTION EFFICIENCY FACTOR-RELATED"/>
    <property type="match status" value="1"/>
</dbReference>
<dbReference type="PANTHER" id="PTHR33383:SF1">
    <property type="entry name" value="MEMBRANE PROTEIN INSERTION EFFICIENCY FACTOR-RELATED"/>
    <property type="match status" value="1"/>
</dbReference>
<dbReference type="Pfam" id="PF01809">
    <property type="entry name" value="YidD"/>
    <property type="match status" value="1"/>
</dbReference>
<dbReference type="SMART" id="SM01234">
    <property type="entry name" value="Haemolytic"/>
    <property type="match status" value="1"/>
</dbReference>
<evidence type="ECO:0000255" key="1">
    <source>
        <dbReference type="HAMAP-Rule" id="MF_00386"/>
    </source>
</evidence>